<keyword id="KW-0963">Cytoplasm</keyword>
<keyword id="KW-0349">Heme</keyword>
<keyword id="KW-0408">Iron</keyword>
<keyword id="KW-0479">Metal-binding</keyword>
<keyword id="KW-0503">Monooxygenase</keyword>
<keyword id="KW-0560">Oxidoreductase</keyword>
<gene>
    <name evidence="1" type="primary">isdG</name>
    <name type="ordered locus">BCB4264_A4651</name>
</gene>
<dbReference type="EC" id="1.14.14.18" evidence="1"/>
<dbReference type="EMBL" id="CP001176">
    <property type="protein sequence ID" value="ACK61348.1"/>
    <property type="molecule type" value="Genomic_DNA"/>
</dbReference>
<dbReference type="RefSeq" id="WP_000587818.1">
    <property type="nucleotide sequence ID" value="NZ_VEHB01000006.1"/>
</dbReference>
<dbReference type="SMR" id="B7HF56"/>
<dbReference type="GeneID" id="72451203"/>
<dbReference type="KEGG" id="bcb:BCB4264_A4651"/>
<dbReference type="HOGENOM" id="CLU_141544_2_1_9"/>
<dbReference type="Proteomes" id="UP000007096">
    <property type="component" value="Chromosome"/>
</dbReference>
<dbReference type="GO" id="GO:0005737">
    <property type="term" value="C:cytoplasm"/>
    <property type="evidence" value="ECO:0007669"/>
    <property type="project" value="UniProtKB-SubCell"/>
</dbReference>
<dbReference type="GO" id="GO:0020037">
    <property type="term" value="F:heme binding"/>
    <property type="evidence" value="ECO:0007669"/>
    <property type="project" value="UniProtKB-UniRule"/>
</dbReference>
<dbReference type="GO" id="GO:0004392">
    <property type="term" value="F:heme oxygenase (decyclizing) activity"/>
    <property type="evidence" value="ECO:0007669"/>
    <property type="project" value="UniProtKB-UniRule"/>
</dbReference>
<dbReference type="GO" id="GO:0005506">
    <property type="term" value="F:iron ion binding"/>
    <property type="evidence" value="ECO:0007669"/>
    <property type="project" value="UniProtKB-UniRule"/>
</dbReference>
<dbReference type="GO" id="GO:0042167">
    <property type="term" value="P:heme catabolic process"/>
    <property type="evidence" value="ECO:0007669"/>
    <property type="project" value="UniProtKB-UniRule"/>
</dbReference>
<dbReference type="GO" id="GO:0033212">
    <property type="term" value="P:iron import into cell"/>
    <property type="evidence" value="ECO:0007669"/>
    <property type="project" value="InterPro"/>
</dbReference>
<dbReference type="Gene3D" id="3.30.70.100">
    <property type="match status" value="1"/>
</dbReference>
<dbReference type="HAMAP" id="MF_01272">
    <property type="entry name" value="Heme_degrading_monooxygenase"/>
    <property type="match status" value="1"/>
</dbReference>
<dbReference type="InterPro" id="IPR007138">
    <property type="entry name" value="ABM_dom"/>
</dbReference>
<dbReference type="InterPro" id="IPR011008">
    <property type="entry name" value="Dimeric_a/b-barrel"/>
</dbReference>
<dbReference type="InterPro" id="IPR050404">
    <property type="entry name" value="Heme-degrading_MO"/>
</dbReference>
<dbReference type="InterPro" id="IPR023953">
    <property type="entry name" value="IsdG"/>
</dbReference>
<dbReference type="NCBIfam" id="NF009839">
    <property type="entry name" value="PRK13314.1"/>
    <property type="match status" value="1"/>
</dbReference>
<dbReference type="PANTHER" id="PTHR34474:SF4">
    <property type="entry name" value="HEME OXYGENASE (STAPHYLOBILIN-PRODUCING) 1"/>
    <property type="match status" value="1"/>
</dbReference>
<dbReference type="PANTHER" id="PTHR34474">
    <property type="entry name" value="SIGNAL TRANSDUCTION PROTEIN TRAP"/>
    <property type="match status" value="1"/>
</dbReference>
<dbReference type="Pfam" id="PF03992">
    <property type="entry name" value="ABM"/>
    <property type="match status" value="1"/>
</dbReference>
<dbReference type="SUPFAM" id="SSF54909">
    <property type="entry name" value="Dimeric alpha+beta barrel"/>
    <property type="match status" value="1"/>
</dbReference>
<dbReference type="PROSITE" id="PS51725">
    <property type="entry name" value="ABM"/>
    <property type="match status" value="1"/>
</dbReference>
<accession>B7HF56</accession>
<sequence>MIIVTNTAKITKGNGHKLIERFNKVGKVETMPGFLGLEVLLTQNTVDYDEVTISTRWNAKEDFQGWTKSAAFKDAHSHQGGMPEYILDNKIAYYDVKVVRMPMAAAQ</sequence>
<proteinExistence type="inferred from homology"/>
<reference key="1">
    <citation type="submission" date="2008-10" db="EMBL/GenBank/DDBJ databases">
        <title>Genome sequence of Bacillus cereus B4264.</title>
        <authorList>
            <person name="Dodson R.J."/>
            <person name="Durkin A.S."/>
            <person name="Rosovitz M.J."/>
            <person name="Rasko D.A."/>
            <person name="Hoffmaster A."/>
            <person name="Ravel J."/>
            <person name="Sutton G."/>
        </authorList>
    </citation>
    <scope>NUCLEOTIDE SEQUENCE [LARGE SCALE GENOMIC DNA]</scope>
    <source>
        <strain>B4264</strain>
    </source>
</reference>
<name>HDOX_BACC4</name>
<comment type="function">
    <text evidence="1">Allows bacterial pathogens to use the host heme as an iron source. Catalyzes the oxidative degradation of the heme macrocyclic porphyrin ring to the biliverdin in the presence of a suitable electron donor such as ascorbate or NADPH--cytochrome P450 reductase, with subsequent release of free iron.</text>
</comment>
<comment type="catalytic activity">
    <reaction evidence="1">
        <text>heme b + 3 reduced [NADPH--hemoprotein reductase] + 3 O2 = biliverdin IXalpha + CO + Fe(2+) + 3 oxidized [NADPH--hemoprotein reductase] + 3 H2O + H(+)</text>
        <dbReference type="Rhea" id="RHEA:21764"/>
        <dbReference type="Rhea" id="RHEA-COMP:11964"/>
        <dbReference type="Rhea" id="RHEA-COMP:11965"/>
        <dbReference type="ChEBI" id="CHEBI:15377"/>
        <dbReference type="ChEBI" id="CHEBI:15378"/>
        <dbReference type="ChEBI" id="CHEBI:15379"/>
        <dbReference type="ChEBI" id="CHEBI:17245"/>
        <dbReference type="ChEBI" id="CHEBI:29033"/>
        <dbReference type="ChEBI" id="CHEBI:57618"/>
        <dbReference type="ChEBI" id="CHEBI:57991"/>
        <dbReference type="ChEBI" id="CHEBI:58210"/>
        <dbReference type="ChEBI" id="CHEBI:60344"/>
        <dbReference type="EC" id="1.14.14.18"/>
    </reaction>
</comment>
<comment type="subunit">
    <text evidence="1">Homodimer.</text>
</comment>
<comment type="subcellular location">
    <subcellularLocation>
        <location evidence="1">Cytoplasm</location>
    </subcellularLocation>
</comment>
<comment type="similarity">
    <text evidence="1">Belongs to the antibiotic biosynthesis monooxygenase family. Heme-degrading monooxygenase IsdG subfamily.</text>
</comment>
<feature type="chain" id="PRO_1000140203" description="Heme-degrading monooxygenase">
    <location>
        <begin position="1"/>
        <end position="107"/>
    </location>
</feature>
<feature type="domain" description="ABM" evidence="1">
    <location>
        <begin position="2"/>
        <end position="94"/>
    </location>
</feature>
<feature type="binding site" evidence="1">
    <location>
        <position position="6"/>
    </location>
    <ligand>
        <name>Fe cation</name>
        <dbReference type="ChEBI" id="CHEBI:24875"/>
    </ligand>
</feature>
<feature type="binding site" description="axial binding residue" evidence="1">
    <location>
        <position position="76"/>
    </location>
    <ligand>
        <name>heme</name>
        <dbReference type="ChEBI" id="CHEBI:30413"/>
    </ligand>
    <ligandPart>
        <name>Fe</name>
        <dbReference type="ChEBI" id="CHEBI:18248"/>
    </ligandPart>
</feature>
<feature type="site" description="Transition state stabilizer" evidence="1">
    <location>
        <position position="66"/>
    </location>
</feature>
<evidence type="ECO:0000255" key="1">
    <source>
        <dbReference type="HAMAP-Rule" id="MF_01272"/>
    </source>
</evidence>
<protein>
    <recommendedName>
        <fullName evidence="1">Heme-degrading monooxygenase</fullName>
        <ecNumber evidence="1">1.14.14.18</ecNumber>
    </recommendedName>
    <alternativeName>
        <fullName evidence="1">Heme oxygenase</fullName>
    </alternativeName>
    <alternativeName>
        <fullName evidence="1">Iron-regulated surface determinant</fullName>
    </alternativeName>
    <alternativeName>
        <fullName evidence="1">Iron-responsive surface determinant</fullName>
    </alternativeName>
</protein>
<organism>
    <name type="scientific">Bacillus cereus (strain B4264)</name>
    <dbReference type="NCBI Taxonomy" id="405532"/>
    <lineage>
        <taxon>Bacteria</taxon>
        <taxon>Bacillati</taxon>
        <taxon>Bacillota</taxon>
        <taxon>Bacilli</taxon>
        <taxon>Bacillales</taxon>
        <taxon>Bacillaceae</taxon>
        <taxon>Bacillus</taxon>
        <taxon>Bacillus cereus group</taxon>
    </lineage>
</organism>